<keyword id="KW-0539">Nucleus</keyword>
<keyword id="KW-1185">Reference proteome</keyword>
<keyword id="KW-0677">Repeat</keyword>
<keyword id="KW-0804">Transcription</keyword>
<keyword id="KW-0805">Transcription regulation</keyword>
<evidence type="ECO:0000250" key="1"/>
<evidence type="ECO:0000250" key="2">
    <source>
        <dbReference type="UniProtKB" id="P32776"/>
    </source>
</evidence>
<evidence type="ECO:0000255" key="3">
    <source>
        <dbReference type="PROSITE-ProRule" id="PRU00036"/>
    </source>
</evidence>
<evidence type="ECO:0000256" key="4">
    <source>
        <dbReference type="SAM" id="MobiDB-lite"/>
    </source>
</evidence>
<evidence type="ECO:0000305" key="5"/>
<sequence>MAPIEIPRGQASYKKREGIITLTPDKTALIWSPLPGTGPPVISLSVSNITNLQQTPKTNPKVVLRVVEKPKAPGADPAAYPFQFTHATEARNEADAIKDLLSQIIAELRGDDPSLPKPAKSGPNGAGASAAMAMASAVNSKHLPFRWFEDDMLKADVELQQSLMKKDKALAHIYNDAKLSKPDSLSDASFNSQFWATRISLLRAYAIELNQKKGSYNVLSTIKPRTENGELKLNINHEQVQLIFQQHPLVKRIYNENVPKLTESEFWSRFFLSRLSKKLRGERITDNDNTDPLFDKYLEADNTMAVPAKITATSVPPIINIEGNEENQGGFRGGNLKDVEMRPRANIPIIKTLNSLSEKIMANVAPTDVDPSAASYSKDGIADALSKQLALQDLRGDAEAQLIRLSVKDTSTFFTGNQPSLTDQEAADARLYATQVPSDVLFEVQADMDTLDSDGRGGIDLHRSIGVDPDSDDEGNNSLDSKSGPKPQHVGSRAALRFAQNQILESMKSARSHLTTTTTHGGSHTTTTNASEERPMSLPTDIAHRATLTCATTAEFLKQFWTVFNNSSNSSPEKQQELAYLADSLVRSKQRIEALADEAEKRRQEIMEKRKREIREYYQKTGRKAKWVPVGGGRDAVWAAFEGVVGGLERAVAVWEMVKSGRI</sequence>
<dbReference type="EMBL" id="AL355933">
    <property type="protein sequence ID" value="CAB91486.1"/>
    <property type="molecule type" value="Genomic_DNA"/>
</dbReference>
<dbReference type="EMBL" id="CM002237">
    <property type="protein sequence ID" value="EAA34010.1"/>
    <property type="molecule type" value="Genomic_DNA"/>
</dbReference>
<dbReference type="PIR" id="T49685">
    <property type="entry name" value="T49685"/>
</dbReference>
<dbReference type="RefSeq" id="XP_963246.1">
    <property type="nucleotide sequence ID" value="XM_958153.2"/>
</dbReference>
<dbReference type="SMR" id="Q9P5N7"/>
<dbReference type="FunCoup" id="Q9P5N7">
    <property type="interactions" value="905"/>
</dbReference>
<dbReference type="STRING" id="367110.Q9P5N7"/>
<dbReference type="PaxDb" id="5141-EFNCRP00000006580"/>
<dbReference type="EnsemblFungi" id="EAA34010">
    <property type="protein sequence ID" value="EAA34010"/>
    <property type="gene ID" value="NCU05423"/>
</dbReference>
<dbReference type="GeneID" id="3879394"/>
<dbReference type="KEGG" id="ncr:NCU05423"/>
<dbReference type="VEuPathDB" id="FungiDB:NCU05423"/>
<dbReference type="HOGENOM" id="CLU_019188_1_0_1"/>
<dbReference type="InParanoid" id="Q9P5N7"/>
<dbReference type="OMA" id="NRPNFDM"/>
<dbReference type="OrthoDB" id="360521at2759"/>
<dbReference type="Proteomes" id="UP000001805">
    <property type="component" value="Chromosome 6, Linkage Group II"/>
</dbReference>
<dbReference type="GO" id="GO:0000439">
    <property type="term" value="C:transcription factor TFIIH core complex"/>
    <property type="evidence" value="ECO:0000318"/>
    <property type="project" value="GO_Central"/>
</dbReference>
<dbReference type="GO" id="GO:0005675">
    <property type="term" value="C:transcription factor TFIIH holo complex"/>
    <property type="evidence" value="ECO:0000318"/>
    <property type="project" value="GO_Central"/>
</dbReference>
<dbReference type="GO" id="GO:0006281">
    <property type="term" value="P:DNA repair"/>
    <property type="evidence" value="ECO:0000318"/>
    <property type="project" value="GO_Central"/>
</dbReference>
<dbReference type="GO" id="GO:0006289">
    <property type="term" value="P:nucleotide-excision repair"/>
    <property type="evidence" value="ECO:0007669"/>
    <property type="project" value="InterPro"/>
</dbReference>
<dbReference type="GO" id="GO:0006360">
    <property type="term" value="P:transcription by RNA polymerase I"/>
    <property type="evidence" value="ECO:0000318"/>
    <property type="project" value="GO_Central"/>
</dbReference>
<dbReference type="GO" id="GO:0006366">
    <property type="term" value="P:transcription by RNA polymerase II"/>
    <property type="evidence" value="ECO:0000318"/>
    <property type="project" value="GO_Central"/>
</dbReference>
<dbReference type="CDD" id="cd13229">
    <property type="entry name" value="PH_TFIIH"/>
    <property type="match status" value="1"/>
</dbReference>
<dbReference type="FunFam" id="2.30.29.30:FF:000406">
    <property type="entry name" value="Putative RNA polymerase II transcription factor related protein"/>
    <property type="match status" value="1"/>
</dbReference>
<dbReference type="Gene3D" id="1.10.3970.10">
    <property type="entry name" value="BSD domain"/>
    <property type="match status" value="1"/>
</dbReference>
<dbReference type="Gene3D" id="2.30.29.30">
    <property type="entry name" value="Pleckstrin-homology domain (PH domain)/Phosphotyrosine-binding domain (PTB)"/>
    <property type="match status" value="1"/>
</dbReference>
<dbReference type="InterPro" id="IPR005607">
    <property type="entry name" value="BSD_dom"/>
</dbReference>
<dbReference type="InterPro" id="IPR035925">
    <property type="entry name" value="BSD_dom_sf"/>
</dbReference>
<dbReference type="InterPro" id="IPR011993">
    <property type="entry name" value="PH-like_dom_sf"/>
</dbReference>
<dbReference type="InterPro" id="IPR027079">
    <property type="entry name" value="Tfb1/GTF2H1"/>
</dbReference>
<dbReference type="InterPro" id="IPR013876">
    <property type="entry name" value="TFIIH_BTF_p62_N"/>
</dbReference>
<dbReference type="PANTHER" id="PTHR12856">
    <property type="entry name" value="TRANSCRIPTION INITIATION FACTOR IIH-RELATED"/>
    <property type="match status" value="1"/>
</dbReference>
<dbReference type="Pfam" id="PF03909">
    <property type="entry name" value="BSD"/>
    <property type="match status" value="2"/>
</dbReference>
<dbReference type="Pfam" id="PF08567">
    <property type="entry name" value="PH_TFIIH"/>
    <property type="match status" value="1"/>
</dbReference>
<dbReference type="SMART" id="SM00751">
    <property type="entry name" value="BSD"/>
    <property type="match status" value="2"/>
</dbReference>
<dbReference type="SUPFAM" id="SSF50729">
    <property type="entry name" value="PH domain-like"/>
    <property type="match status" value="1"/>
</dbReference>
<dbReference type="PROSITE" id="PS50858">
    <property type="entry name" value="BSD"/>
    <property type="match status" value="2"/>
</dbReference>
<reference key="1">
    <citation type="journal article" date="2003" name="Nucleic Acids Res.">
        <title>What's in the genome of a filamentous fungus? Analysis of the Neurospora genome sequence.</title>
        <authorList>
            <person name="Mannhaupt G."/>
            <person name="Montrone C."/>
            <person name="Haase D."/>
            <person name="Mewes H.-W."/>
            <person name="Aign V."/>
            <person name="Hoheisel J.D."/>
            <person name="Fartmann B."/>
            <person name="Nyakatura G."/>
            <person name="Kempken F."/>
            <person name="Maier J."/>
            <person name="Schulte U."/>
        </authorList>
    </citation>
    <scope>NUCLEOTIDE SEQUENCE [LARGE SCALE GENOMIC DNA]</scope>
    <source>
        <strain>ATCC 24698 / 74-OR23-1A / CBS 708.71 / DSM 1257 / FGSC 987</strain>
    </source>
</reference>
<reference key="2">
    <citation type="journal article" date="2003" name="Nature">
        <title>The genome sequence of the filamentous fungus Neurospora crassa.</title>
        <authorList>
            <person name="Galagan J.E."/>
            <person name="Calvo S.E."/>
            <person name="Borkovich K.A."/>
            <person name="Selker E.U."/>
            <person name="Read N.D."/>
            <person name="Jaffe D.B."/>
            <person name="FitzHugh W."/>
            <person name="Ma L.-J."/>
            <person name="Smirnov S."/>
            <person name="Purcell S."/>
            <person name="Rehman B."/>
            <person name="Elkins T."/>
            <person name="Engels R."/>
            <person name="Wang S."/>
            <person name="Nielsen C.B."/>
            <person name="Butler J."/>
            <person name="Endrizzi M."/>
            <person name="Qui D."/>
            <person name="Ianakiev P."/>
            <person name="Bell-Pedersen D."/>
            <person name="Nelson M.A."/>
            <person name="Werner-Washburne M."/>
            <person name="Selitrennikoff C.P."/>
            <person name="Kinsey J.A."/>
            <person name="Braun E.L."/>
            <person name="Zelter A."/>
            <person name="Schulte U."/>
            <person name="Kothe G.O."/>
            <person name="Jedd G."/>
            <person name="Mewes H.-W."/>
            <person name="Staben C."/>
            <person name="Marcotte E."/>
            <person name="Greenberg D."/>
            <person name="Roy A."/>
            <person name="Foley K."/>
            <person name="Naylor J."/>
            <person name="Stange-Thomann N."/>
            <person name="Barrett R."/>
            <person name="Gnerre S."/>
            <person name="Kamal M."/>
            <person name="Kamvysselis M."/>
            <person name="Mauceli E.W."/>
            <person name="Bielke C."/>
            <person name="Rudd S."/>
            <person name="Frishman D."/>
            <person name="Krystofova S."/>
            <person name="Rasmussen C."/>
            <person name="Metzenberg R.L."/>
            <person name="Perkins D.D."/>
            <person name="Kroken S."/>
            <person name="Cogoni C."/>
            <person name="Macino G."/>
            <person name="Catcheside D.E.A."/>
            <person name="Li W."/>
            <person name="Pratt R.J."/>
            <person name="Osmani S.A."/>
            <person name="DeSouza C.P.C."/>
            <person name="Glass N.L."/>
            <person name="Orbach M.J."/>
            <person name="Berglund J.A."/>
            <person name="Voelker R."/>
            <person name="Yarden O."/>
            <person name="Plamann M."/>
            <person name="Seiler S."/>
            <person name="Dunlap J.C."/>
            <person name="Radford A."/>
            <person name="Aramayo R."/>
            <person name="Natvig D.O."/>
            <person name="Alex L.A."/>
            <person name="Mannhaupt G."/>
            <person name="Ebbole D.J."/>
            <person name="Freitag M."/>
            <person name="Paulsen I."/>
            <person name="Sachs M.S."/>
            <person name="Lander E.S."/>
            <person name="Nusbaum C."/>
            <person name="Birren B.W."/>
        </authorList>
    </citation>
    <scope>NUCLEOTIDE SEQUENCE [LARGE SCALE GENOMIC DNA]</scope>
    <source>
        <strain>ATCC 24698 / 74-OR23-1A / CBS 708.71 / DSM 1257 / FGSC 987</strain>
    </source>
</reference>
<name>TFB1_NEUCR</name>
<gene>
    <name type="primary">tcf-29</name>
    <name type="ORF">B8B20.390</name>
    <name type="ORF">NCU05423</name>
</gene>
<feature type="chain" id="PRO_0000119259" description="General transcription and DNA repair factor IIH subunit tcf-29">
    <location>
        <begin position="1"/>
        <end position="663"/>
    </location>
</feature>
<feature type="domain" description="BSD 1" evidence="3">
    <location>
        <begin position="147"/>
        <end position="206"/>
    </location>
</feature>
<feature type="domain" description="BSD 2" evidence="3">
    <location>
        <begin position="227"/>
        <end position="278"/>
    </location>
</feature>
<feature type="region of interest" description="Disordered" evidence="4">
    <location>
        <begin position="452"/>
        <end position="491"/>
    </location>
</feature>
<feature type="region of interest" description="Disordered" evidence="4">
    <location>
        <begin position="513"/>
        <end position="535"/>
    </location>
</feature>
<feature type="compositionally biased region" description="Basic and acidic residues" evidence="4">
    <location>
        <begin position="453"/>
        <end position="465"/>
    </location>
</feature>
<feature type="compositionally biased region" description="Low complexity" evidence="4">
    <location>
        <begin position="515"/>
        <end position="528"/>
    </location>
</feature>
<proteinExistence type="inferred from homology"/>
<protein>
    <recommendedName>
        <fullName>General transcription and DNA repair factor IIH subunit tcf-29</fullName>
        <shortName>TFIIH subunit tcf-29</shortName>
    </recommendedName>
    <alternativeName>
        <fullName>RNA polymerase II transcription factor B 73 kDa subunit</fullName>
    </alternativeName>
    <alternativeName>
        <fullName>RNA polymerase II transcription factor B p73 subunit</fullName>
    </alternativeName>
    <alternativeName>
        <fullName>RNA polymerase II transcription factor B subunit 1</fullName>
    </alternativeName>
    <alternativeName>
        <fullName>Transcription factor-29</fullName>
    </alternativeName>
</protein>
<organism>
    <name type="scientific">Neurospora crassa (strain ATCC 24698 / 74-OR23-1A / CBS 708.71 / DSM 1257 / FGSC 987)</name>
    <dbReference type="NCBI Taxonomy" id="367110"/>
    <lineage>
        <taxon>Eukaryota</taxon>
        <taxon>Fungi</taxon>
        <taxon>Dikarya</taxon>
        <taxon>Ascomycota</taxon>
        <taxon>Pezizomycotina</taxon>
        <taxon>Sordariomycetes</taxon>
        <taxon>Sordariomycetidae</taxon>
        <taxon>Sordariales</taxon>
        <taxon>Sordariaceae</taxon>
        <taxon>Neurospora</taxon>
    </lineage>
</organism>
<comment type="function">
    <text evidence="2">Component of the general transcription and DNA repair factor IIH (TFIIH) core complex, which is involved in general and transcription-coupled nucleotide excision repair (NER) of damaged DNA and, when complexed to TFIIK, in RNA transcription by RNA polymerase II. In NER, TFIIH acts by opening DNA around the lesion to allow the excision of the damaged oligonucleotide and its replacement by a new DNA fragment. In transcription, TFIIH has an essential role in transcription initiation. When the pre-initiation complex (PIC) has been established, TFIIH is required for promoter opening and promoter escape. Phosphorylation of the C-terminal tail (CTD) of the largest subunit of RNA polymerase II by the kinase module TFIIK controls the initiation of transcription.</text>
</comment>
<comment type="subunit">
    <text evidence="2">Component of the 7-subunit TFIIH core complex composed of XPB/rad25, XPD/dnr-10, tcf-30/SSL1, tcf-29/TFB1, tcf-11/TFB2, tcf-14/TFB4 and rtf-1/TFB5, which is active in NER. The core complex associates with the 3-subunit CTD-kinase module TFIIK composed of div-66/cyclin H, prk-3/KIN28 and rtf-2/TFB3 to form the 10-subunit holoenzyme (holo-TFIIH) active in transcription.</text>
</comment>
<comment type="subcellular location">
    <subcellularLocation>
        <location evidence="1">Nucleus</location>
    </subcellularLocation>
</comment>
<comment type="similarity">
    <text evidence="5">Belongs to the TFB1 family.</text>
</comment>
<accession>Q9P5N7</accession>
<accession>Q7SC31</accession>